<evidence type="ECO:0000250" key="1"/>
<evidence type="ECO:0000256" key="2">
    <source>
        <dbReference type="SAM" id="MobiDB-lite"/>
    </source>
</evidence>
<evidence type="ECO:0000305" key="3"/>
<keyword id="KW-0489">Methyltransferase</keyword>
<keyword id="KW-0949">S-adenosyl-L-methionine</keyword>
<keyword id="KW-0808">Transferase</keyword>
<name>Y4155_MYCUA</name>
<dbReference type="EC" id="2.1.1.-"/>
<dbReference type="EMBL" id="CP000325">
    <property type="protein sequence ID" value="ABL06195.1"/>
    <property type="molecule type" value="Genomic_DNA"/>
</dbReference>
<dbReference type="RefSeq" id="WP_011741799.1">
    <property type="nucleotide sequence ID" value="NC_008611.1"/>
</dbReference>
<dbReference type="SMR" id="A0PV26"/>
<dbReference type="GeneID" id="93435032"/>
<dbReference type="KEGG" id="mul:MUL_4155"/>
<dbReference type="eggNOG" id="COG0566">
    <property type="taxonomic scope" value="Bacteria"/>
</dbReference>
<dbReference type="HOGENOM" id="CLU_021322_0_0_11"/>
<dbReference type="Proteomes" id="UP000000765">
    <property type="component" value="Chromosome"/>
</dbReference>
<dbReference type="GO" id="GO:0005829">
    <property type="term" value="C:cytosol"/>
    <property type="evidence" value="ECO:0007669"/>
    <property type="project" value="TreeGrafter"/>
</dbReference>
<dbReference type="GO" id="GO:0003723">
    <property type="term" value="F:RNA binding"/>
    <property type="evidence" value="ECO:0007669"/>
    <property type="project" value="InterPro"/>
</dbReference>
<dbReference type="GO" id="GO:0008173">
    <property type="term" value="F:RNA methyltransferase activity"/>
    <property type="evidence" value="ECO:0007669"/>
    <property type="project" value="InterPro"/>
</dbReference>
<dbReference type="GO" id="GO:0032259">
    <property type="term" value="P:methylation"/>
    <property type="evidence" value="ECO:0007669"/>
    <property type="project" value="UniProtKB-KW"/>
</dbReference>
<dbReference type="GO" id="GO:0006396">
    <property type="term" value="P:RNA processing"/>
    <property type="evidence" value="ECO:0007669"/>
    <property type="project" value="InterPro"/>
</dbReference>
<dbReference type="CDD" id="cd18103">
    <property type="entry name" value="SpoU-like_RlmB"/>
    <property type="match status" value="1"/>
</dbReference>
<dbReference type="FunFam" id="3.30.1330.30:FF:000024">
    <property type="entry name" value="Putative tRNA/rRNA methyltransferase"/>
    <property type="match status" value="1"/>
</dbReference>
<dbReference type="FunFam" id="3.40.1280.10:FF:000015">
    <property type="entry name" value="Putative tRNA/rRNA methyltransferase"/>
    <property type="match status" value="1"/>
</dbReference>
<dbReference type="Gene3D" id="3.30.1330.30">
    <property type="match status" value="1"/>
</dbReference>
<dbReference type="Gene3D" id="3.40.1280.10">
    <property type="match status" value="1"/>
</dbReference>
<dbReference type="InterPro" id="IPR029028">
    <property type="entry name" value="Alpha/beta_knot_MTases"/>
</dbReference>
<dbReference type="InterPro" id="IPR029064">
    <property type="entry name" value="Ribosomal_eL30-like_sf"/>
</dbReference>
<dbReference type="InterPro" id="IPR004441">
    <property type="entry name" value="rRNA_MeTrfase_TrmH"/>
</dbReference>
<dbReference type="InterPro" id="IPR001537">
    <property type="entry name" value="SpoU_MeTrfase"/>
</dbReference>
<dbReference type="InterPro" id="IPR013123">
    <property type="entry name" value="SpoU_subst-bd"/>
</dbReference>
<dbReference type="InterPro" id="IPR029026">
    <property type="entry name" value="tRNA_m1G_MTases_N"/>
</dbReference>
<dbReference type="NCBIfam" id="TIGR00186">
    <property type="entry name" value="rRNA_methyl_3"/>
    <property type="match status" value="1"/>
</dbReference>
<dbReference type="PANTHER" id="PTHR46429">
    <property type="entry name" value="23S RRNA (GUANOSINE-2'-O-)-METHYLTRANSFERASE RLMB"/>
    <property type="match status" value="1"/>
</dbReference>
<dbReference type="PANTHER" id="PTHR46429:SF1">
    <property type="entry name" value="23S RRNA (GUANOSINE-2'-O-)-METHYLTRANSFERASE RLMB"/>
    <property type="match status" value="1"/>
</dbReference>
<dbReference type="Pfam" id="PF00588">
    <property type="entry name" value="SpoU_methylase"/>
    <property type="match status" value="1"/>
</dbReference>
<dbReference type="Pfam" id="PF08032">
    <property type="entry name" value="SpoU_sub_bind"/>
    <property type="match status" value="1"/>
</dbReference>
<dbReference type="SMART" id="SM00967">
    <property type="entry name" value="SpoU_sub_bind"/>
    <property type="match status" value="1"/>
</dbReference>
<dbReference type="SUPFAM" id="SSF75217">
    <property type="entry name" value="alpha/beta knot"/>
    <property type="match status" value="1"/>
</dbReference>
<dbReference type="SUPFAM" id="SSF55315">
    <property type="entry name" value="L30e-like"/>
    <property type="match status" value="1"/>
</dbReference>
<organism>
    <name type="scientific">Mycobacterium ulcerans (strain Agy99)</name>
    <dbReference type="NCBI Taxonomy" id="362242"/>
    <lineage>
        <taxon>Bacteria</taxon>
        <taxon>Bacillati</taxon>
        <taxon>Actinomycetota</taxon>
        <taxon>Actinomycetes</taxon>
        <taxon>Mycobacteriales</taxon>
        <taxon>Mycobacteriaceae</taxon>
        <taxon>Mycobacterium</taxon>
        <taxon>Mycobacterium ulcerans group</taxon>
    </lineage>
</organism>
<feature type="chain" id="PRO_0000379583" description="Uncharacterized tRNA/rRNA methyltransferase MUL_4155">
    <location>
        <begin position="1"/>
        <end position="310"/>
    </location>
</feature>
<feature type="region of interest" description="Disordered" evidence="2">
    <location>
        <begin position="1"/>
        <end position="70"/>
    </location>
</feature>
<feature type="compositionally biased region" description="Basic residues" evidence="2">
    <location>
        <begin position="49"/>
        <end position="62"/>
    </location>
</feature>
<feature type="binding site" evidence="1">
    <location>
        <position position="262"/>
    </location>
    <ligand>
        <name>S-adenosyl-L-methionine</name>
        <dbReference type="ChEBI" id="CHEBI:59789"/>
    </ligand>
</feature>
<feature type="binding site" evidence="1">
    <location>
        <position position="282"/>
    </location>
    <ligand>
        <name>S-adenosyl-L-methionine</name>
        <dbReference type="ChEBI" id="CHEBI:59789"/>
    </ligand>
</feature>
<feature type="binding site" evidence="1">
    <location>
        <position position="291"/>
    </location>
    <ligand>
        <name>S-adenosyl-L-methionine</name>
        <dbReference type="ChEBI" id="CHEBI:59789"/>
    </ligand>
</feature>
<comment type="similarity">
    <text evidence="3">Belongs to the class IV-like SAM-binding methyltransferase superfamily. RNA methyltransferase TrmH family.</text>
</comment>
<protein>
    <recommendedName>
        <fullName>Uncharacterized tRNA/rRNA methyltransferase MUL_4155</fullName>
        <ecNumber>2.1.1.-</ecNumber>
    </recommendedName>
</protein>
<accession>A0PV26</accession>
<sequence>MAGNSQRRGAIRKSGTKKGTSVGSGGQRRRGLEGRGPTPSAHMRPNHPAAKRAKAQQRRPARGRTDETETVLGRNPVLECLRAGVPSTALYVALGVEADERLTESVSRAADSGIPILEVPRTDLDRMTANHLHQGIALQVPPYNYAHPDDLLAAALDTPPALLVALDNISDPRNLGAIVRSVAAFGGHGVLIPQRRSASVTAVAWRTSAGAAARMPVARATNLTRALKDWADRGVRVVGLDAGGDTAIDDLDGSDPIVVVVGSEGKGLSRLVRQTCDEVVSVPMAGPTESLNASVAAGVVLAEIARQRRT</sequence>
<gene>
    <name type="ordered locus">MUL_4155</name>
</gene>
<proteinExistence type="inferred from homology"/>
<reference key="1">
    <citation type="journal article" date="2007" name="Genome Res.">
        <title>Reductive evolution and niche adaptation inferred from the genome of Mycobacterium ulcerans, the causative agent of Buruli ulcer.</title>
        <authorList>
            <person name="Stinear T.P."/>
            <person name="Seemann T."/>
            <person name="Pidot S."/>
            <person name="Frigui W."/>
            <person name="Reysset G."/>
            <person name="Garnier T."/>
            <person name="Meurice G."/>
            <person name="Simon D."/>
            <person name="Bouchier C."/>
            <person name="Ma L."/>
            <person name="Tichit M."/>
            <person name="Porter J.L."/>
            <person name="Ryan J."/>
            <person name="Johnson P.D.R."/>
            <person name="Davies J.K."/>
            <person name="Jenkin G.A."/>
            <person name="Small P.L.C."/>
            <person name="Jones L.M."/>
            <person name="Tekaia F."/>
            <person name="Laval F."/>
            <person name="Daffe M."/>
            <person name="Parkhill J."/>
            <person name="Cole S.T."/>
        </authorList>
    </citation>
    <scope>NUCLEOTIDE SEQUENCE [LARGE SCALE GENOMIC DNA]</scope>
    <source>
        <strain>Agy99</strain>
    </source>
</reference>